<keyword id="KW-0002">3D-structure</keyword>
<keyword id="KW-0020">Allergen</keyword>
<keyword id="KW-0732">Signal</keyword>
<comment type="subunit">
    <text evidence="2">May exist as homodimer and homotrimer.</text>
</comment>
<comment type="tissue specificity">
    <text evidence="2">Midgut and hindgut contents as well as fecal pellets (at protein level).</text>
</comment>
<comment type="allergen">
    <text evidence="2 3 4">Causes an allergic reaction in human. Binds to IgE. Common symptoms of mite allergy are bronchial asthma, allergic rhinitis and conjunctivitis.</text>
</comment>
<comment type="similarity">
    <text evidence="8">Belongs to the mite group 5 allergen family.</text>
</comment>
<sequence length="129" mass="14843">MKFIIALAALIAVACALPVSNDNFRHEFDHMIVNTATQRFHEIEKFLLHITHEVDDLEKTGNKDEKARLLRELTVSEAFIEGSRGYFQRELKRTDLDLLEKFNFEAALATGDLLLKDLKALQKRVQDSE</sequence>
<accession>A7IZE9</accession>
<accession>A7IZF1</accession>
<accession>A7IZF2</accession>
<accession>A7IZF3</accession>
<accession>A7IZF5</accession>
<dbReference type="EMBL" id="AY800348">
    <property type="protein sequence ID" value="AAX34047.1"/>
    <property type="molecule type" value="mRNA"/>
</dbReference>
<dbReference type="EMBL" id="DQ788677">
    <property type="protein sequence ID" value="ABH06344.1"/>
    <property type="molecule type" value="Genomic_DNA"/>
</dbReference>
<dbReference type="EMBL" id="DQ788678">
    <property type="protein sequence ID" value="ABH06345.1"/>
    <property type="molecule type" value="Genomic_DNA"/>
</dbReference>
<dbReference type="EMBL" id="DQ788679">
    <property type="protein sequence ID" value="ABH06346.1"/>
    <property type="molecule type" value="Genomic_DNA"/>
</dbReference>
<dbReference type="EMBL" id="DQ788680">
    <property type="protein sequence ID" value="ABH06347.1"/>
    <property type="molecule type" value="Genomic_DNA"/>
</dbReference>
<dbReference type="EMBL" id="DQ788681">
    <property type="protein sequence ID" value="ABH06348.1"/>
    <property type="molecule type" value="Genomic_DNA"/>
</dbReference>
<dbReference type="EMBL" id="DQ788682">
    <property type="protein sequence ID" value="ABH06349.1"/>
    <property type="molecule type" value="Genomic_DNA"/>
</dbReference>
<dbReference type="EMBL" id="DQ788683">
    <property type="protein sequence ID" value="ABH06350.1"/>
    <property type="molecule type" value="Genomic_DNA"/>
</dbReference>
<dbReference type="PDB" id="2LM9">
    <property type="method" value="NMR"/>
    <property type="chains" value="A=34-129"/>
</dbReference>
<dbReference type="PDBsum" id="2LM9"/>
<dbReference type="SMR" id="A7IZE9"/>
<dbReference type="Allergome" id="3568">
    <property type="allergen name" value="Blo t 21"/>
</dbReference>
<dbReference type="Allergome" id="3569">
    <property type="allergen name" value="Blo t 21.0101"/>
</dbReference>
<dbReference type="EvolutionaryTrace" id="A7IZE9"/>
<dbReference type="GO" id="GO:0019863">
    <property type="term" value="F:IgE binding"/>
    <property type="evidence" value="ECO:0000315"/>
    <property type="project" value="UniProtKB"/>
</dbReference>
<dbReference type="GO" id="GO:0042803">
    <property type="term" value="F:protein homodimerization activity"/>
    <property type="evidence" value="ECO:0000314"/>
    <property type="project" value="UniProtKB"/>
</dbReference>
<dbReference type="Gene3D" id="1.20.58.970">
    <property type="match status" value="1"/>
</dbReference>
<dbReference type="InterPro" id="IPR020306">
    <property type="entry name" value="Mite_allergen_group-5/21"/>
</dbReference>
<dbReference type="InterPro" id="IPR038455">
    <property type="entry name" value="Mite_allergen_group-5/21_sf"/>
</dbReference>
<dbReference type="Pfam" id="PF11642">
    <property type="entry name" value="Blo-t-5"/>
    <property type="match status" value="1"/>
</dbReference>
<proteinExistence type="evidence at protein level"/>
<reference evidence="9 10 11 12 13" key="1">
    <citation type="journal article" date="2007" name="J. Allergy Clin. Immunol.">
        <title>Identification and characterization of a novel allergen from Blomia tropicalis: Blo t 21.</title>
        <authorList>
            <person name="Gao Y.F."/>
            <person name="Wang D.Y."/>
            <person name="Ong T.C."/>
            <person name="Tay S.L."/>
            <person name="Yap K.H."/>
            <person name="Chew F.T."/>
        </authorList>
    </citation>
    <scope>NUCLEOTIDE SEQUENCE [MRNA]</scope>
    <scope>NUCLEOTIDE SEQUENCE [GENOMIC DNA]</scope>
    <scope>SUBUNIT</scope>
    <scope>TISSUE SPECIFICITY</scope>
    <scope>ALLERGEN</scope>
    <scope>CIRCULAR DICHROISM ANALYSIS</scope>
</reference>
<reference key="2">
    <citation type="journal article" date="2013" name="BMC Immunol.">
        <title>Blomia tropicalis Blo t 5 and Blo t 21 recombinant allergens might confer higher specificity to serodiagnostic assays than whole mite extract.</title>
        <authorList>
            <person name="dos Anjos Carvalho K."/>
            <person name="de Melo-Neto O.P."/>
            <person name="Magalhaes F.B."/>
            <person name="Ponte J.C."/>
            <person name="Felipe F.A."/>
            <person name="dos Santos M.C."/>
            <person name="dos Santos Lima G."/>
            <person name="Cruz A.A."/>
            <person name="Pinheiro C.S."/>
            <person name="Pontes-de-Carvalho L.C."/>
            <person name="Alcantara-Neves N.M."/>
        </authorList>
    </citation>
    <scope>ALLERGEN</scope>
</reference>
<reference evidence="14" key="3">
    <citation type="journal article" date="2012" name="J. Biol. Chem.">
        <title>NMR structure and IgE epitopes of Blo t 21, a major dust mite allergen from Blomia tropicalis.</title>
        <authorList>
            <person name="Tan K.W."/>
            <person name="Ong T.C."/>
            <person name="Gao Y.F."/>
            <person name="Tiong Y.S."/>
            <person name="Wong K.N."/>
            <person name="Chew F.T."/>
            <person name="Mok Y.K."/>
        </authorList>
    </citation>
    <scope>STRUCTURE BY NMR OF 34-129</scope>
    <scope>ALLERGEN</scope>
    <scope>MUTAGENESIS OF ARG-39; GLU-42; LYS-45; GLU-53; GLU-58; LYS-59; GLU-65; LYS-66; GLU-77; ARG-84; GLU-90; ASP-95; ASP-97; GLU-100; GLU-105; ASP-112 AND LYS-123</scope>
    <scope>CIRCULAR DICHROISM ANALYSIS</scope>
</reference>
<feature type="signal peptide" evidence="1">
    <location>
        <begin position="1"/>
        <end position="16"/>
    </location>
</feature>
<feature type="chain" id="PRO_5010958292" description="Mite allergen Blo t 21" evidence="1">
    <location>
        <begin position="17"/>
        <end position="129"/>
    </location>
</feature>
<feature type="mutagenesis site" description="Over 20% reduction in IgE-binding." evidence="3">
    <original>R</original>
    <variation>A</variation>
    <location>
        <position position="39"/>
    </location>
</feature>
<feature type="mutagenesis site" description="Over 20% reduction in IgE-binding." evidence="3">
    <original>E</original>
    <variation>A</variation>
    <location>
        <position position="42"/>
    </location>
</feature>
<feature type="mutagenesis site" description="Over 20% reduction in IgE-binding." evidence="3">
    <original>K</original>
    <variation>A</variation>
    <location>
        <position position="45"/>
    </location>
</feature>
<feature type="mutagenesis site" description="Over 20% reduction in IgE-binding." evidence="3">
    <original>E</original>
    <variation>A</variation>
    <location>
        <position position="53"/>
    </location>
</feature>
<feature type="mutagenesis site" description="Over 20% reduction in IgE-binding." evidence="3">
    <original>E</original>
    <variation>A</variation>
    <location>
        <position position="58"/>
    </location>
</feature>
<feature type="mutagenesis site" description="Over 20% reduction in IgE-binding." evidence="3">
    <original>K</original>
    <variation>A</variation>
    <location>
        <position position="59"/>
    </location>
</feature>
<feature type="mutagenesis site" description="Over 20% reduction in IgE-binding." evidence="3">
    <original>E</original>
    <variation>A</variation>
    <location>
        <position position="65"/>
    </location>
</feature>
<feature type="mutagenesis site" description="Over 20% reduction in IgE-binding." evidence="3">
    <original>K</original>
    <variation>A</variation>
    <location>
        <position position="66"/>
    </location>
</feature>
<feature type="mutagenesis site" description="Over 20% reduction in IgE-binding." evidence="3">
    <original>E</original>
    <variation>A</variation>
    <location>
        <position position="77"/>
    </location>
</feature>
<feature type="mutagenesis site" description="Over 20% reduction in IgE-binding." evidence="3">
    <original>R</original>
    <variation>A</variation>
    <location>
        <position position="84"/>
    </location>
</feature>
<feature type="mutagenesis site" description="Over 20% reduction in IgE-binding. Further reduction in IgE-binding; when associated with A-95, A-100 or A-105. Most significant reduction in IgE-binding; when associated with A-95 and A-105 or with A-95; A-105 and A-112." evidence="3">
    <original>E</original>
    <variation>A</variation>
    <location>
        <position position="90"/>
    </location>
</feature>
<feature type="mutagenesis site" description="Over 20% reduction in IgE-binding. Further reduction in IgE-binding; when associated with A-90 or A-105. Most significant reduction in IgE-binding; when associated with A-90 and A-105, with A-105 and A-112 or with A-90; A-105 and A-112." evidence="3">
    <original>D</original>
    <variation>A</variation>
    <location>
        <position position="95"/>
    </location>
</feature>
<feature type="mutagenesis site" description="No effect in IgE-binding." evidence="3">
    <original>D</original>
    <variation>A</variation>
    <location>
        <position position="97"/>
    </location>
</feature>
<feature type="mutagenesis site" description="Over 20% reduction in IgE-binding. Further reduction of IgE-binding; when associated with A-90." evidence="3">
    <original>E</original>
    <variation>A</variation>
    <location>
        <position position="100"/>
    </location>
</feature>
<feature type="mutagenesis site" description="Over 20% reduction in IgE-binding. Further reduction in IgE-binding; when associated with A-90, A-95 or A-112. Most significant reduction in IgE-binding; when associated with A-90 and A-95, with A-95 and A-112 or with A-90; A-95 and A-112." evidence="3">
    <original>E</original>
    <variation>A</variation>
    <location>
        <position position="105"/>
    </location>
</feature>
<feature type="mutagenesis site" description="Over 20% reduction in IgE-binding. Further reduction in IgE-binding; when associated with A-105, with A-95 and A-105 or with A-90; A-95 and A-105." evidence="3">
    <original>D</original>
    <variation>A</variation>
    <location>
        <position position="112"/>
    </location>
</feature>
<feature type="mutagenesis site" description="Over 20% reduction in IgE-binding." evidence="3">
    <original>K</original>
    <variation>A</variation>
    <location>
        <position position="123"/>
    </location>
</feature>
<feature type="sequence conflict" description="In Ref. 1; ABH06348/ABH06349." evidence="8" ref="1">
    <original>V</original>
    <variation>I</variation>
    <location>
        <position position="33"/>
    </location>
</feature>
<feature type="sequence conflict" description="In Ref. 1; ABH06347." evidence="8" ref="1">
    <original>T</original>
    <variation>A</variation>
    <location>
        <position position="35"/>
    </location>
</feature>
<feature type="sequence conflict" description="In Ref. 1; ABH06350." evidence="8" ref="1">
    <original>K</original>
    <variation>E</variation>
    <location>
        <position position="59"/>
    </location>
</feature>
<feature type="sequence conflict" description="In Ref. 1; ABH06346." evidence="8" ref="1">
    <original>L</original>
    <variation>P</variation>
    <location>
        <position position="69"/>
    </location>
</feature>
<feature type="helix" evidence="15">
    <location>
        <begin position="35"/>
        <end position="60"/>
    </location>
</feature>
<feature type="helix" evidence="15">
    <location>
        <begin position="65"/>
        <end position="90"/>
    </location>
</feature>
<feature type="helix" evidence="15">
    <location>
        <begin position="98"/>
        <end position="128"/>
    </location>
</feature>
<name>ALL21_BLOTA</name>
<organism evidence="9">
    <name type="scientific">Blomia tropicalis</name>
    <name type="common">Mite</name>
    <dbReference type="NCBI Taxonomy" id="40697"/>
    <lineage>
        <taxon>Eukaryota</taxon>
        <taxon>Metazoa</taxon>
        <taxon>Ecdysozoa</taxon>
        <taxon>Arthropoda</taxon>
        <taxon>Chelicerata</taxon>
        <taxon>Arachnida</taxon>
        <taxon>Acari</taxon>
        <taxon>Acariformes</taxon>
        <taxon>Sarcoptiformes</taxon>
        <taxon>Astigmata</taxon>
        <taxon>Glycyphagoidea</taxon>
        <taxon>Echimyopodidae</taxon>
        <taxon>Blomia</taxon>
    </lineage>
</organism>
<protein>
    <recommendedName>
        <fullName evidence="8">Mite allergen Blo t 21</fullName>
    </recommendedName>
    <alternativeName>
        <fullName evidence="6">Mite group 21 allergen Blo t 21</fullName>
    </alternativeName>
    <allergenName evidence="5 6 7">Blo t 21</allergenName>
</protein>
<evidence type="ECO:0000255" key="1"/>
<evidence type="ECO:0000269" key="2">
    <source>
    </source>
</evidence>
<evidence type="ECO:0000269" key="3">
    <source>
    </source>
</evidence>
<evidence type="ECO:0000269" key="4">
    <source>
    </source>
</evidence>
<evidence type="ECO:0000303" key="5">
    <source>
    </source>
</evidence>
<evidence type="ECO:0000303" key="6">
    <source>
    </source>
</evidence>
<evidence type="ECO:0000303" key="7">
    <source>
    </source>
</evidence>
<evidence type="ECO:0000305" key="8"/>
<evidence type="ECO:0000312" key="9">
    <source>
        <dbReference type="EMBL" id="ABH06344.1"/>
    </source>
</evidence>
<evidence type="ECO:0000312" key="10">
    <source>
        <dbReference type="EMBL" id="ABH06346.1"/>
    </source>
</evidence>
<evidence type="ECO:0000312" key="11">
    <source>
        <dbReference type="EMBL" id="ABH06347.1"/>
    </source>
</evidence>
<evidence type="ECO:0000312" key="12">
    <source>
        <dbReference type="EMBL" id="ABH06348.1"/>
    </source>
</evidence>
<evidence type="ECO:0000312" key="13">
    <source>
        <dbReference type="EMBL" id="ABH06350.1"/>
    </source>
</evidence>
<evidence type="ECO:0007744" key="14">
    <source>
        <dbReference type="PDB" id="2LM9"/>
    </source>
</evidence>
<evidence type="ECO:0007829" key="15">
    <source>
        <dbReference type="PDB" id="2LM9"/>
    </source>
</evidence>